<comment type="function">
    <text evidence="2">Transcription factor that plays an important role in cellular development and cell survival. Recognizes and binds to the DNA sequence 5'-GCG(T/G)GGGCG-3'. Regulates the expression of numerous target genes, including EPO. Plays an essential role for development of the urogenital system. It has a tumor suppressor as well as an oncogenic role in tumor formation. Function may be isoform-specific: isoforms lacking the KTS motif may act as transcription factors. Isoforms containing the KTS motif may bind mRNA and play a role in mRNA metabolism or splicing.</text>
</comment>
<comment type="subunit">
    <text evidence="1">Interacts with ZNF224 via the zinc-finger region. Interacts with WTAP, AMER1 and SRY. Homodimer. Interacts with WTIP. Interacts with actively translating polysomes. Detected in nuclear ribonucleoprotein (mRNP) particles. Interacts with U2AF2. Interacts with HNRNPU via the zinc-finger region. Interacts with CITED2 (By similarity).</text>
</comment>
<comment type="subcellular location">
    <molecule>Isoform 1</molecule>
    <subcellularLocation>
        <location evidence="1">Nucleus speckle</location>
    </subcellularLocation>
</comment>
<comment type="subcellular location">
    <molecule>Isoform 2</molecule>
    <subcellularLocation>
        <location evidence="1">Nucleus</location>
        <location evidence="1">Nucleoplasm</location>
    </subcellularLocation>
</comment>
<comment type="subcellular location">
    <subcellularLocation>
        <location evidence="1">Nucleus</location>
    </subcellularLocation>
    <subcellularLocation>
        <location evidence="1">Cytoplasm</location>
    </subcellularLocation>
    <subcellularLocation>
        <location evidence="1">Nucleus speckle</location>
    </subcellularLocation>
    <text evidence="1">Shuttles between nucleus and cytoplasm.</text>
</comment>
<comment type="alternative products">
    <event type="alternative splicing"/>
    <isoform>
        <id>P49953-1</id>
        <name>1</name>
        <sequence type="displayed"/>
    </isoform>
    <isoform>
        <id>P49953-2</id>
        <name>2</name>
        <sequence type="described" ref="VSP_006875"/>
    </isoform>
</comment>
<comment type="domain">
    <text evidence="2">Binds to DNA motifs with the sequence 5'-GCG(T/G)GGGCG-3' via its C2H2-type zinc fingers. Starting from the N-terminus, the second zinc finger binds to the 3'-GCG motif, the middle zinc finger interacts with the central TGG motif, and the C-terminal zinc finger binds to the 5'-GCG motif. Binds double-stranded target DNA, irrespective of the cytosine methylation status. Has reduced affinity for target DNA where the cytosines have been oxidized to 5-hydroxymethylcytosine, 5-formylcytosine or 5-carboxylcytosine.</text>
</comment>
<comment type="domain">
    <text evidence="2">The 9aaTAD motif is a transactivation domain present in a large number of yeast and animal transcription factors.</text>
</comment>
<comment type="miscellaneous">
    <text evidence="1">Presence of the KTS motif hinders interactions between DNA and zinc-finger 4.</text>
</comment>
<comment type="similarity">
    <text evidence="5">Belongs to the EGR C2H2-type zinc-finger protein family.</text>
</comment>
<reference key="1">
    <citation type="journal article" date="1995" name="Oncogene">
        <title>The evolution of WT1 sequence and expression pattern in the vertebrates.</title>
        <authorList>
            <person name="Kent J."/>
            <person name="Coriat A.M."/>
            <person name="Sharpe P.T."/>
            <person name="Hastie N.D."/>
            <person name="van Heyningen V."/>
        </authorList>
    </citation>
    <scope>NUCLEOTIDE SEQUENCE [MRNA] (ISOFORMS 1 AND 2)</scope>
    <source>
        <tissue>Testis</tissue>
    </source>
</reference>
<feature type="chain" id="PRO_0000047136" description="Wilms tumor protein homolog">
    <location>
        <begin position="1" status="less than"/>
        <end position="239"/>
    </location>
</feature>
<feature type="zinc finger region" description="C2H2-type 1" evidence="3">
    <location>
        <begin position="113"/>
        <end position="137"/>
    </location>
</feature>
<feature type="zinc finger region" description="C2H2-type 2" evidence="3">
    <location>
        <begin position="143"/>
        <end position="167"/>
    </location>
</feature>
<feature type="zinc finger region" description="C2H2-type 3" evidence="3">
    <location>
        <begin position="173"/>
        <end position="195"/>
    </location>
</feature>
<feature type="zinc finger region" description="C2H2-type 4" evidence="3">
    <location>
        <begin position="204"/>
        <end position="228"/>
    </location>
</feature>
<feature type="region of interest" description="Important for interaction with target DNA" evidence="1">
    <location>
        <begin position="157"/>
        <end position="171"/>
    </location>
</feature>
<feature type="region of interest" description="Important for interaction with target DNA" evidence="1">
    <location>
        <begin position="183"/>
        <end position="191"/>
    </location>
</feature>
<feature type="short sequence motif" description="9aaTAD" evidence="2">
    <location>
        <begin position="43"/>
        <end position="51"/>
    </location>
</feature>
<feature type="short sequence motif" description="KTS motif" evidence="1">
    <location>
        <begin position="198"/>
        <end position="200"/>
    </location>
</feature>
<feature type="site" description="Important for interaction with target DNA" evidence="1">
    <location>
        <position position="214"/>
    </location>
</feature>
<feature type="site" description="Important for interaction with target DNA" evidence="1">
    <location>
        <position position="220"/>
    </location>
</feature>
<feature type="cross-link" description="Glycyl lysine isopeptide (Lys-Gly) (interchain with G-Cter in SUMO2)" evidence="2">
    <location>
        <position position="234"/>
    </location>
</feature>
<feature type="splice variant" id="VSP_006875" description="In isoform 2." evidence="4">
    <location>
        <begin position="198"/>
        <end position="200"/>
    </location>
</feature>
<feature type="non-terminal residue">
    <location>
        <position position="1"/>
    </location>
</feature>
<name>WT1_SMIMA</name>
<accession>P49953</accession>
<sequence length="239" mass="27793">SVPPPVYGCHTPTDSCTGSQALLLRTPYNSDNLYQMTSQLECMTWNQMNLGATLKGHTTGYENDNHTTPILCGAQYRIHTHGVFRGIQDVRRVPGVAPTIVRSATETNEKRPFMCAYPGCNKRYFKLSHLQMHSRKHTGEKPYQCDFKDCERRFSRSDQLKRHQRRHTGVKPFQCKTCQRKFSRSDHLKTHTRTHTGKTSEKPFSCRWPSCQKKFARSDELVRHHNMHQRNMTKLQLTL</sequence>
<protein>
    <recommendedName>
        <fullName>Wilms tumor protein homolog</fullName>
    </recommendedName>
</protein>
<organism>
    <name type="scientific">Sminthopsis macroura</name>
    <name type="common">Stripe-faced dunnart</name>
    <dbReference type="NCBI Taxonomy" id="9302"/>
    <lineage>
        <taxon>Eukaryota</taxon>
        <taxon>Metazoa</taxon>
        <taxon>Chordata</taxon>
        <taxon>Craniata</taxon>
        <taxon>Vertebrata</taxon>
        <taxon>Euteleostomi</taxon>
        <taxon>Mammalia</taxon>
        <taxon>Metatheria</taxon>
        <taxon>Dasyuromorphia</taxon>
        <taxon>Dasyuridae</taxon>
        <taxon>Sminthopsis</taxon>
    </lineage>
</organism>
<evidence type="ECO:0000250" key="1"/>
<evidence type="ECO:0000250" key="2">
    <source>
        <dbReference type="UniProtKB" id="P19544"/>
    </source>
</evidence>
<evidence type="ECO:0000255" key="3">
    <source>
        <dbReference type="PROSITE-ProRule" id="PRU00042"/>
    </source>
</evidence>
<evidence type="ECO:0000303" key="4">
    <source>
    </source>
</evidence>
<evidence type="ECO:0000305" key="5"/>
<keyword id="KW-0025">Alternative splicing</keyword>
<keyword id="KW-0963">Cytoplasm</keyword>
<keyword id="KW-0238">DNA-binding</keyword>
<keyword id="KW-1017">Isopeptide bond</keyword>
<keyword id="KW-0479">Metal-binding</keyword>
<keyword id="KW-0539">Nucleus</keyword>
<keyword id="KW-0677">Repeat</keyword>
<keyword id="KW-0694">RNA-binding</keyword>
<keyword id="KW-0804">Transcription</keyword>
<keyword id="KW-0805">Transcription regulation</keyword>
<keyword id="KW-0043">Tumor suppressor</keyword>
<keyword id="KW-0832">Ubl conjugation</keyword>
<keyword id="KW-0862">Zinc</keyword>
<keyword id="KW-0863">Zinc-finger</keyword>
<dbReference type="EMBL" id="X85732">
    <property type="protein sequence ID" value="CAA59737.1"/>
    <property type="molecule type" value="mRNA"/>
</dbReference>
<dbReference type="SMR" id="P49953"/>
<dbReference type="GO" id="GO:0005737">
    <property type="term" value="C:cytoplasm"/>
    <property type="evidence" value="ECO:0000250"/>
    <property type="project" value="UniProtKB"/>
</dbReference>
<dbReference type="GO" id="GO:0016607">
    <property type="term" value="C:nuclear speck"/>
    <property type="evidence" value="ECO:0000250"/>
    <property type="project" value="UniProtKB"/>
</dbReference>
<dbReference type="GO" id="GO:0005654">
    <property type="term" value="C:nucleoplasm"/>
    <property type="evidence" value="ECO:0000250"/>
    <property type="project" value="UniProtKB"/>
</dbReference>
<dbReference type="GO" id="GO:0005634">
    <property type="term" value="C:nucleus"/>
    <property type="evidence" value="ECO:0000250"/>
    <property type="project" value="UniProtKB"/>
</dbReference>
<dbReference type="GO" id="GO:0001228">
    <property type="term" value="F:DNA-binding transcription activator activity, RNA polymerase II-specific"/>
    <property type="evidence" value="ECO:0000250"/>
    <property type="project" value="UniProtKB"/>
</dbReference>
<dbReference type="GO" id="GO:0003700">
    <property type="term" value="F:DNA-binding transcription factor activity"/>
    <property type="evidence" value="ECO:0000250"/>
    <property type="project" value="UniProtKB"/>
</dbReference>
<dbReference type="GO" id="GO:0010385">
    <property type="term" value="F:double-stranded methylated DNA binding"/>
    <property type="evidence" value="ECO:0000250"/>
    <property type="project" value="UniProtKB"/>
</dbReference>
<dbReference type="GO" id="GO:0044729">
    <property type="term" value="F:hemi-methylated DNA-binding"/>
    <property type="evidence" value="ECO:0000250"/>
    <property type="project" value="UniProtKB"/>
</dbReference>
<dbReference type="GO" id="GO:0003723">
    <property type="term" value="F:RNA binding"/>
    <property type="evidence" value="ECO:0007669"/>
    <property type="project" value="UniProtKB-KW"/>
</dbReference>
<dbReference type="GO" id="GO:0000978">
    <property type="term" value="F:RNA polymerase II cis-regulatory region sequence-specific DNA binding"/>
    <property type="evidence" value="ECO:0007669"/>
    <property type="project" value="TreeGrafter"/>
</dbReference>
<dbReference type="GO" id="GO:0043565">
    <property type="term" value="F:sequence-specific DNA binding"/>
    <property type="evidence" value="ECO:0000250"/>
    <property type="project" value="UniProtKB"/>
</dbReference>
<dbReference type="GO" id="GO:0000976">
    <property type="term" value="F:transcription cis-regulatory region binding"/>
    <property type="evidence" value="ECO:0000250"/>
    <property type="project" value="UniProtKB"/>
</dbReference>
<dbReference type="GO" id="GO:0008270">
    <property type="term" value="F:zinc ion binding"/>
    <property type="evidence" value="ECO:0000250"/>
    <property type="project" value="UniProtKB"/>
</dbReference>
<dbReference type="GO" id="GO:0035802">
    <property type="term" value="P:adrenal cortex formation"/>
    <property type="evidence" value="ECO:0000250"/>
    <property type="project" value="UniProtKB"/>
</dbReference>
<dbReference type="GO" id="GO:0030325">
    <property type="term" value="P:adrenal gland development"/>
    <property type="evidence" value="ECO:0000250"/>
    <property type="project" value="UniProtKB"/>
</dbReference>
<dbReference type="GO" id="GO:0001658">
    <property type="term" value="P:branching involved in ureteric bud morphogenesis"/>
    <property type="evidence" value="ECO:0000250"/>
    <property type="project" value="UniProtKB"/>
</dbReference>
<dbReference type="GO" id="GO:0043010">
    <property type="term" value="P:camera-type eye development"/>
    <property type="evidence" value="ECO:0000250"/>
    <property type="project" value="UniProtKB"/>
</dbReference>
<dbReference type="GO" id="GO:0071371">
    <property type="term" value="P:cellular response to gonadotropin stimulus"/>
    <property type="evidence" value="ECO:0000250"/>
    <property type="project" value="UniProtKB"/>
</dbReference>
<dbReference type="GO" id="GO:0060539">
    <property type="term" value="P:diaphragm development"/>
    <property type="evidence" value="ECO:0000250"/>
    <property type="project" value="UniProtKB"/>
</dbReference>
<dbReference type="GO" id="GO:0030855">
    <property type="term" value="P:epithelial cell differentiation"/>
    <property type="evidence" value="ECO:0000250"/>
    <property type="project" value="UniProtKB"/>
</dbReference>
<dbReference type="GO" id="GO:0007281">
    <property type="term" value="P:germ cell development"/>
    <property type="evidence" value="ECO:0000250"/>
    <property type="project" value="UniProtKB"/>
</dbReference>
<dbReference type="GO" id="GO:0032835">
    <property type="term" value="P:glomerulus development"/>
    <property type="evidence" value="ECO:0000250"/>
    <property type="project" value="UniProtKB"/>
</dbReference>
<dbReference type="GO" id="GO:0008406">
    <property type="term" value="P:gonad development"/>
    <property type="evidence" value="ECO:0000250"/>
    <property type="project" value="UniProtKB"/>
</dbReference>
<dbReference type="GO" id="GO:0007507">
    <property type="term" value="P:heart development"/>
    <property type="evidence" value="ECO:0000250"/>
    <property type="project" value="UniProtKB"/>
</dbReference>
<dbReference type="GO" id="GO:0030539">
    <property type="term" value="P:male genitalia development"/>
    <property type="evidence" value="ECO:0000250"/>
    <property type="project" value="UniProtKB"/>
</dbReference>
<dbReference type="GO" id="GO:0060231">
    <property type="term" value="P:mesenchymal to epithelial transition"/>
    <property type="evidence" value="ECO:0000250"/>
    <property type="project" value="UniProtKB"/>
</dbReference>
<dbReference type="GO" id="GO:0072075">
    <property type="term" value="P:metanephric mesenchyme development"/>
    <property type="evidence" value="ECO:0000250"/>
    <property type="project" value="UniProtKB"/>
</dbReference>
<dbReference type="GO" id="GO:0072284">
    <property type="term" value="P:metanephric S-shaped body morphogenesis"/>
    <property type="evidence" value="ECO:0000250"/>
    <property type="project" value="UniProtKB"/>
</dbReference>
<dbReference type="GO" id="GO:0043066">
    <property type="term" value="P:negative regulation of apoptotic process"/>
    <property type="evidence" value="ECO:0000250"/>
    <property type="project" value="UniProtKB"/>
</dbReference>
<dbReference type="GO" id="GO:0030308">
    <property type="term" value="P:negative regulation of cell growth"/>
    <property type="evidence" value="ECO:0000250"/>
    <property type="project" value="UniProtKB"/>
</dbReference>
<dbReference type="GO" id="GO:0045892">
    <property type="term" value="P:negative regulation of DNA-templated transcription"/>
    <property type="evidence" value="ECO:0000250"/>
    <property type="project" value="UniProtKB"/>
</dbReference>
<dbReference type="GO" id="GO:2000195">
    <property type="term" value="P:negative regulation of female gonad development"/>
    <property type="evidence" value="ECO:0000250"/>
    <property type="project" value="UniProtKB"/>
</dbReference>
<dbReference type="GO" id="GO:0072302">
    <property type="term" value="P:negative regulation of metanephric glomerular mesangial cell proliferation"/>
    <property type="evidence" value="ECO:0000250"/>
    <property type="project" value="UniProtKB"/>
</dbReference>
<dbReference type="GO" id="GO:0017148">
    <property type="term" value="P:negative regulation of translation"/>
    <property type="evidence" value="ECO:0000250"/>
    <property type="project" value="UniProtKB"/>
</dbReference>
<dbReference type="GO" id="GO:0072112">
    <property type="term" value="P:podocyte differentiation"/>
    <property type="evidence" value="ECO:0000250"/>
    <property type="project" value="UniProtKB"/>
</dbReference>
<dbReference type="GO" id="GO:0043065">
    <property type="term" value="P:positive regulation of apoptotic process"/>
    <property type="evidence" value="ECO:0000250"/>
    <property type="project" value="UniProtKB"/>
</dbReference>
<dbReference type="GO" id="GO:0045893">
    <property type="term" value="P:positive regulation of DNA-templated transcription"/>
    <property type="evidence" value="ECO:0000250"/>
    <property type="project" value="UniProtKB"/>
</dbReference>
<dbReference type="GO" id="GO:0060421">
    <property type="term" value="P:positive regulation of heart growth"/>
    <property type="evidence" value="ECO:0000250"/>
    <property type="project" value="UniProtKB"/>
</dbReference>
<dbReference type="GO" id="GO:2000020">
    <property type="term" value="P:positive regulation of male gonad development"/>
    <property type="evidence" value="ECO:0000250"/>
    <property type="project" value="UniProtKB"/>
</dbReference>
<dbReference type="GO" id="GO:2001076">
    <property type="term" value="P:positive regulation of metanephric ureteric bud development"/>
    <property type="evidence" value="ECO:0000250"/>
    <property type="project" value="UniProtKB"/>
</dbReference>
<dbReference type="GO" id="GO:0072166">
    <property type="term" value="P:posterior mesonephric tubule development"/>
    <property type="evidence" value="ECO:0000250"/>
    <property type="project" value="UniProtKB"/>
</dbReference>
<dbReference type="GO" id="GO:0003156">
    <property type="term" value="P:regulation of animal organ formation"/>
    <property type="evidence" value="ECO:0000250"/>
    <property type="project" value="UniProtKB"/>
</dbReference>
<dbReference type="GO" id="GO:0006355">
    <property type="term" value="P:regulation of DNA-templated transcription"/>
    <property type="evidence" value="ECO:0000250"/>
    <property type="project" value="UniProtKB"/>
</dbReference>
<dbReference type="GO" id="GO:0006357">
    <property type="term" value="P:regulation of transcription by RNA polymerase II"/>
    <property type="evidence" value="ECO:0000250"/>
    <property type="project" value="UniProtKB"/>
</dbReference>
<dbReference type="GO" id="GO:0008380">
    <property type="term" value="P:RNA splicing"/>
    <property type="evidence" value="ECO:0000250"/>
    <property type="project" value="UniProtKB"/>
</dbReference>
<dbReference type="GO" id="GO:0007530">
    <property type="term" value="P:sex determination"/>
    <property type="evidence" value="ECO:0000250"/>
    <property type="project" value="UniProtKB"/>
</dbReference>
<dbReference type="GO" id="GO:0007356">
    <property type="term" value="P:thorax and anterior abdomen determination"/>
    <property type="evidence" value="ECO:0000250"/>
    <property type="project" value="UniProtKB"/>
</dbReference>
<dbReference type="GO" id="GO:0009888">
    <property type="term" value="P:tissue development"/>
    <property type="evidence" value="ECO:0000250"/>
    <property type="project" value="UniProtKB"/>
</dbReference>
<dbReference type="GO" id="GO:0001657">
    <property type="term" value="P:ureteric bud development"/>
    <property type="evidence" value="ECO:0000250"/>
    <property type="project" value="UniProtKB"/>
</dbReference>
<dbReference type="GO" id="GO:0001570">
    <property type="term" value="P:vasculogenesis"/>
    <property type="evidence" value="ECO:0000250"/>
    <property type="project" value="UniProtKB"/>
</dbReference>
<dbReference type="GO" id="GO:0061032">
    <property type="term" value="P:visceral serous pericardium development"/>
    <property type="evidence" value="ECO:0000250"/>
    <property type="project" value="UniProtKB"/>
</dbReference>
<dbReference type="FunFam" id="3.30.160.60:FF:000018">
    <property type="entry name" value="Krueppel-like factor 15"/>
    <property type="match status" value="1"/>
</dbReference>
<dbReference type="FunFam" id="3.30.160.60:FF:000228">
    <property type="entry name" value="Wilms tumor 1-KTS isoform"/>
    <property type="match status" value="1"/>
</dbReference>
<dbReference type="FunFam" id="3.30.160.60:FF:000241">
    <property type="entry name" value="Wilms tumor 1-KTS isoform"/>
    <property type="match status" value="1"/>
</dbReference>
<dbReference type="FunFam" id="3.30.160.60:FF:001182">
    <property type="entry name" value="Zinc finger, C2H2 type"/>
    <property type="match status" value="1"/>
</dbReference>
<dbReference type="Gene3D" id="3.30.160.60">
    <property type="entry name" value="Classic Zinc Finger"/>
    <property type="match status" value="4"/>
</dbReference>
<dbReference type="InterPro" id="IPR000976">
    <property type="entry name" value="Wilms_tumour_N"/>
</dbReference>
<dbReference type="InterPro" id="IPR036236">
    <property type="entry name" value="Znf_C2H2_sf"/>
</dbReference>
<dbReference type="InterPro" id="IPR013087">
    <property type="entry name" value="Znf_C2H2_type"/>
</dbReference>
<dbReference type="PANTHER" id="PTHR23235:SF65">
    <property type="entry name" value="KRUEPPEL-LIKE FACTOR 11"/>
    <property type="match status" value="1"/>
</dbReference>
<dbReference type="PANTHER" id="PTHR23235">
    <property type="entry name" value="KRUEPPEL-LIKE TRANSCRIPTION FACTOR"/>
    <property type="match status" value="1"/>
</dbReference>
<dbReference type="Pfam" id="PF02165">
    <property type="entry name" value="WT1"/>
    <property type="match status" value="1"/>
</dbReference>
<dbReference type="Pfam" id="PF00096">
    <property type="entry name" value="zf-C2H2"/>
    <property type="match status" value="3"/>
</dbReference>
<dbReference type="SMART" id="SM00355">
    <property type="entry name" value="ZnF_C2H2"/>
    <property type="match status" value="4"/>
</dbReference>
<dbReference type="SUPFAM" id="SSF57667">
    <property type="entry name" value="beta-beta-alpha zinc fingers"/>
    <property type="match status" value="2"/>
</dbReference>
<dbReference type="PROSITE" id="PS00028">
    <property type="entry name" value="ZINC_FINGER_C2H2_1"/>
    <property type="match status" value="4"/>
</dbReference>
<dbReference type="PROSITE" id="PS50157">
    <property type="entry name" value="ZINC_FINGER_C2H2_2"/>
    <property type="match status" value="4"/>
</dbReference>
<gene>
    <name type="primary">WT1</name>
</gene>
<proteinExistence type="evidence at transcript level"/>